<comment type="function">
    <text evidence="1">Specifically methylates guanosine-37 in various tRNAs.</text>
</comment>
<comment type="catalytic activity">
    <reaction evidence="1">
        <text>guanosine(37) in tRNA + S-adenosyl-L-methionine = N(1)-methylguanosine(37) in tRNA + S-adenosyl-L-homocysteine + H(+)</text>
        <dbReference type="Rhea" id="RHEA:36899"/>
        <dbReference type="Rhea" id="RHEA-COMP:10145"/>
        <dbReference type="Rhea" id="RHEA-COMP:10147"/>
        <dbReference type="ChEBI" id="CHEBI:15378"/>
        <dbReference type="ChEBI" id="CHEBI:57856"/>
        <dbReference type="ChEBI" id="CHEBI:59789"/>
        <dbReference type="ChEBI" id="CHEBI:73542"/>
        <dbReference type="ChEBI" id="CHEBI:74269"/>
        <dbReference type="EC" id="2.1.1.228"/>
    </reaction>
</comment>
<comment type="subunit">
    <text evidence="1">Homodimer.</text>
</comment>
<comment type="subcellular location">
    <subcellularLocation>
        <location evidence="1">Cytoplasm</location>
    </subcellularLocation>
</comment>
<comment type="similarity">
    <text evidence="1">Belongs to the RNA methyltransferase TrmD family.</text>
</comment>
<reference key="1">
    <citation type="journal article" date="2007" name="PLoS Genet.">
        <title>Meningococcal genetic variation mechanisms viewed through comparative analysis of serogroup C strain FAM18.</title>
        <authorList>
            <person name="Bentley S.D."/>
            <person name="Vernikos G.S."/>
            <person name="Snyder L.A.S."/>
            <person name="Churcher C."/>
            <person name="Arrowsmith C."/>
            <person name="Chillingworth T."/>
            <person name="Cronin A."/>
            <person name="Davis P.H."/>
            <person name="Holroyd N.E."/>
            <person name="Jagels K."/>
            <person name="Maddison M."/>
            <person name="Moule S."/>
            <person name="Rabbinowitsch E."/>
            <person name="Sharp S."/>
            <person name="Unwin L."/>
            <person name="Whitehead S."/>
            <person name="Quail M.A."/>
            <person name="Achtman M."/>
            <person name="Barrell B.G."/>
            <person name="Saunders N.J."/>
            <person name="Parkhill J."/>
        </authorList>
    </citation>
    <scope>NUCLEOTIDE SEQUENCE [LARGE SCALE GENOMIC DNA]</scope>
    <source>
        <strain>ATCC 700532 / DSM 15464 / FAM18</strain>
    </source>
</reference>
<keyword id="KW-0963">Cytoplasm</keyword>
<keyword id="KW-0489">Methyltransferase</keyword>
<keyword id="KW-0949">S-adenosyl-L-methionine</keyword>
<keyword id="KW-0808">Transferase</keyword>
<keyword id="KW-0819">tRNA processing</keyword>
<sequence length="249" mass="27814">MLIQAVTIFPEMFDSITRYGVTGRANRQGIWQFEAVNPRKFADNRLGYIDDRPFGGGPGMIMMAPPLHAAIEHAKAQSSQAAKVIYLSPQGKPLTHQKAVELAELPHLILLCGRYEGIDERLLQSSVDEEISIGDFVVSGGELPAMMLMDAVLRLVPGVLGDMQSAEQDSFSSGILDCPHYTKPLEFQGMAVPEVLRSGNHGLIAEWRLEQSLRRTLERRPDLLEKRSLIPKESRILNKILQEQREIQS</sequence>
<dbReference type="EC" id="2.1.1.228" evidence="1"/>
<dbReference type="EMBL" id="AM421808">
    <property type="protein sequence ID" value="CAM09829.1"/>
    <property type="molecule type" value="Genomic_DNA"/>
</dbReference>
<dbReference type="RefSeq" id="WP_002217807.1">
    <property type="nucleotide sequence ID" value="NC_008767.1"/>
</dbReference>
<dbReference type="SMR" id="A1KSJ9"/>
<dbReference type="KEGG" id="nmc:NMC0532"/>
<dbReference type="HOGENOM" id="CLU_047363_0_1_4"/>
<dbReference type="Proteomes" id="UP000002286">
    <property type="component" value="Chromosome"/>
</dbReference>
<dbReference type="GO" id="GO:0005829">
    <property type="term" value="C:cytosol"/>
    <property type="evidence" value="ECO:0007669"/>
    <property type="project" value="TreeGrafter"/>
</dbReference>
<dbReference type="GO" id="GO:0052906">
    <property type="term" value="F:tRNA (guanine(37)-N1)-methyltransferase activity"/>
    <property type="evidence" value="ECO:0007669"/>
    <property type="project" value="UniProtKB-UniRule"/>
</dbReference>
<dbReference type="GO" id="GO:0002939">
    <property type="term" value="P:tRNA N1-guanine methylation"/>
    <property type="evidence" value="ECO:0007669"/>
    <property type="project" value="TreeGrafter"/>
</dbReference>
<dbReference type="CDD" id="cd18080">
    <property type="entry name" value="TrmD-like"/>
    <property type="match status" value="1"/>
</dbReference>
<dbReference type="FunFam" id="1.10.1270.20:FF:000001">
    <property type="entry name" value="tRNA (guanine-N(1)-)-methyltransferase"/>
    <property type="match status" value="1"/>
</dbReference>
<dbReference type="FunFam" id="3.40.1280.10:FF:000001">
    <property type="entry name" value="tRNA (guanine-N(1)-)-methyltransferase"/>
    <property type="match status" value="1"/>
</dbReference>
<dbReference type="Gene3D" id="3.40.1280.10">
    <property type="match status" value="1"/>
</dbReference>
<dbReference type="Gene3D" id="1.10.1270.20">
    <property type="entry name" value="tRNA(m1g37)methyltransferase, domain 2"/>
    <property type="match status" value="1"/>
</dbReference>
<dbReference type="HAMAP" id="MF_00605">
    <property type="entry name" value="TrmD"/>
    <property type="match status" value="1"/>
</dbReference>
<dbReference type="InterPro" id="IPR029028">
    <property type="entry name" value="Alpha/beta_knot_MTases"/>
</dbReference>
<dbReference type="InterPro" id="IPR023148">
    <property type="entry name" value="tRNA_m1G_MeTrfase_C_sf"/>
</dbReference>
<dbReference type="InterPro" id="IPR002649">
    <property type="entry name" value="tRNA_m1G_MeTrfase_TrmD"/>
</dbReference>
<dbReference type="InterPro" id="IPR029026">
    <property type="entry name" value="tRNA_m1G_MTases_N"/>
</dbReference>
<dbReference type="InterPro" id="IPR016009">
    <property type="entry name" value="tRNA_MeTrfase_TRMD/TRM10"/>
</dbReference>
<dbReference type="NCBIfam" id="NF000648">
    <property type="entry name" value="PRK00026.1"/>
    <property type="match status" value="1"/>
</dbReference>
<dbReference type="NCBIfam" id="TIGR00088">
    <property type="entry name" value="trmD"/>
    <property type="match status" value="1"/>
</dbReference>
<dbReference type="PANTHER" id="PTHR46417">
    <property type="entry name" value="TRNA (GUANINE-N(1)-)-METHYLTRANSFERASE"/>
    <property type="match status" value="1"/>
</dbReference>
<dbReference type="PANTHER" id="PTHR46417:SF1">
    <property type="entry name" value="TRNA (GUANINE-N(1)-)-METHYLTRANSFERASE"/>
    <property type="match status" value="1"/>
</dbReference>
<dbReference type="Pfam" id="PF01746">
    <property type="entry name" value="tRNA_m1G_MT"/>
    <property type="match status" value="1"/>
</dbReference>
<dbReference type="PIRSF" id="PIRSF000386">
    <property type="entry name" value="tRNA_mtase"/>
    <property type="match status" value="1"/>
</dbReference>
<dbReference type="SUPFAM" id="SSF75217">
    <property type="entry name" value="alpha/beta knot"/>
    <property type="match status" value="1"/>
</dbReference>
<organism>
    <name type="scientific">Neisseria meningitidis serogroup C / serotype 2a (strain ATCC 700532 / DSM 15464 / FAM18)</name>
    <dbReference type="NCBI Taxonomy" id="272831"/>
    <lineage>
        <taxon>Bacteria</taxon>
        <taxon>Pseudomonadati</taxon>
        <taxon>Pseudomonadota</taxon>
        <taxon>Betaproteobacteria</taxon>
        <taxon>Neisseriales</taxon>
        <taxon>Neisseriaceae</taxon>
        <taxon>Neisseria</taxon>
    </lineage>
</organism>
<evidence type="ECO:0000255" key="1">
    <source>
        <dbReference type="HAMAP-Rule" id="MF_00605"/>
    </source>
</evidence>
<gene>
    <name evidence="1" type="primary">trmD</name>
    <name type="ordered locus">NMC0532</name>
</gene>
<accession>A1KSJ9</accession>
<feature type="chain" id="PRO_1000006499" description="tRNA (guanine-N(1)-)-methyltransferase">
    <location>
        <begin position="1"/>
        <end position="249"/>
    </location>
</feature>
<feature type="binding site" evidence="1">
    <location>
        <position position="113"/>
    </location>
    <ligand>
        <name>S-adenosyl-L-methionine</name>
        <dbReference type="ChEBI" id="CHEBI:59789"/>
    </ligand>
</feature>
<feature type="binding site" evidence="1">
    <location>
        <begin position="133"/>
        <end position="138"/>
    </location>
    <ligand>
        <name>S-adenosyl-L-methionine</name>
        <dbReference type="ChEBI" id="CHEBI:59789"/>
    </ligand>
</feature>
<protein>
    <recommendedName>
        <fullName evidence="1">tRNA (guanine-N(1)-)-methyltransferase</fullName>
        <ecNumber evidence="1">2.1.1.228</ecNumber>
    </recommendedName>
    <alternativeName>
        <fullName evidence="1">M1G-methyltransferase</fullName>
    </alternativeName>
    <alternativeName>
        <fullName evidence="1">tRNA [GM37] methyltransferase</fullName>
    </alternativeName>
</protein>
<name>TRMD_NEIMF</name>
<proteinExistence type="inferred from homology"/>